<keyword id="KW-0326">Glycosidase</keyword>
<keyword id="KW-0378">Hydrolase</keyword>
<keyword id="KW-1185">Reference proteome</keyword>
<keyword id="KW-0964">Secreted</keyword>
<keyword id="KW-0732">Signal</keyword>
<sequence length="238" mass="24928">MKKTVVASTLAVGLGVTGFAAGNSADASEQGVDKAQLAQQAQSNPESLNAAPVQDGAYDINFNYNNTDYSFQSDGQYWTWSYGQGSTNAPAQETAEQPQLVEQPQQTEQASTEQPAQEAAPQTEETQQPQQEATTQTTSSSNESTSNESSSSEASEGSSVNVNSHLQAIAQRESGGDLKAVNPSSGAAGKYQFLQSTWDSVAPSEYQGVSPTEAPEAVQDAAAVKLYNTAGASQWVTA</sequence>
<proteinExistence type="inferred from homology"/>
<accession>Q4A0X5</accession>
<feature type="signal peptide" evidence="2">
    <location>
        <begin position="1"/>
        <end position="27"/>
    </location>
</feature>
<feature type="chain" id="PRO_0000320321" description="Probable transglycosylase SceD 1">
    <location>
        <begin position="28"/>
        <end position="238"/>
    </location>
</feature>
<feature type="region of interest" description="Disordered" evidence="3">
    <location>
        <begin position="87"/>
        <end position="161"/>
    </location>
</feature>
<feature type="compositionally biased region" description="Polar residues" evidence="3">
    <location>
        <begin position="87"/>
        <end position="97"/>
    </location>
</feature>
<feature type="compositionally biased region" description="Low complexity" evidence="3">
    <location>
        <begin position="102"/>
        <end position="156"/>
    </location>
</feature>
<comment type="function">
    <text evidence="1">Is able to cleave peptidoglycan and affects clumping and separation of bacterial cells.</text>
</comment>
<comment type="subcellular location">
    <subcellularLocation>
        <location evidence="1">Secreted</location>
    </subcellularLocation>
</comment>
<comment type="similarity">
    <text evidence="4">Belongs to the transglycosylase family. SceD subfamily.</text>
</comment>
<evidence type="ECO:0000250" key="1"/>
<evidence type="ECO:0000255" key="2"/>
<evidence type="ECO:0000256" key="3">
    <source>
        <dbReference type="SAM" id="MobiDB-lite"/>
    </source>
</evidence>
<evidence type="ECO:0000305" key="4"/>
<name>SCED1_STAS1</name>
<dbReference type="EC" id="3.2.-.-"/>
<dbReference type="EMBL" id="AP008934">
    <property type="protein sequence ID" value="BAE17262.1"/>
    <property type="molecule type" value="Genomic_DNA"/>
</dbReference>
<dbReference type="RefSeq" id="WP_011302117.1">
    <property type="nucleotide sequence ID" value="NC_007350.1"/>
</dbReference>
<dbReference type="SMR" id="Q4A0X5"/>
<dbReference type="GeneID" id="3616372"/>
<dbReference type="KEGG" id="ssp:SSP0117"/>
<dbReference type="PATRIC" id="fig|342451.11.peg.121"/>
<dbReference type="eggNOG" id="COG1388">
    <property type="taxonomic scope" value="Bacteria"/>
</dbReference>
<dbReference type="HOGENOM" id="CLU_099865_0_0_9"/>
<dbReference type="OrthoDB" id="2314263at2"/>
<dbReference type="Proteomes" id="UP000006371">
    <property type="component" value="Chromosome"/>
</dbReference>
<dbReference type="GO" id="GO:0005576">
    <property type="term" value="C:extracellular region"/>
    <property type="evidence" value="ECO:0007669"/>
    <property type="project" value="UniProtKB-SubCell"/>
</dbReference>
<dbReference type="GO" id="GO:0016798">
    <property type="term" value="F:hydrolase activity, acting on glycosyl bonds"/>
    <property type="evidence" value="ECO:0007669"/>
    <property type="project" value="UniProtKB-KW"/>
</dbReference>
<dbReference type="CDD" id="cd13925">
    <property type="entry name" value="RPF"/>
    <property type="match status" value="1"/>
</dbReference>
<dbReference type="Gene3D" id="1.10.530.10">
    <property type="match status" value="1"/>
</dbReference>
<dbReference type="InterPro" id="IPR023346">
    <property type="entry name" value="Lysozyme-like_dom_sf"/>
</dbReference>
<dbReference type="InterPro" id="IPR010618">
    <property type="entry name" value="RPF"/>
</dbReference>
<dbReference type="Pfam" id="PF06737">
    <property type="entry name" value="Transglycosylas"/>
    <property type="match status" value="1"/>
</dbReference>
<dbReference type="SUPFAM" id="SSF53955">
    <property type="entry name" value="Lysozyme-like"/>
    <property type="match status" value="1"/>
</dbReference>
<organism>
    <name type="scientific">Staphylococcus saprophyticus subsp. saprophyticus (strain ATCC 15305 / DSM 20229 / NCIMB 8711 / NCTC 7292 / S-41)</name>
    <dbReference type="NCBI Taxonomy" id="342451"/>
    <lineage>
        <taxon>Bacteria</taxon>
        <taxon>Bacillati</taxon>
        <taxon>Bacillota</taxon>
        <taxon>Bacilli</taxon>
        <taxon>Bacillales</taxon>
        <taxon>Staphylococcaceae</taxon>
        <taxon>Staphylococcus</taxon>
    </lineage>
</organism>
<protein>
    <recommendedName>
        <fullName>Probable transglycosylase SceD 1</fullName>
        <ecNumber>3.2.-.-</ecNumber>
    </recommendedName>
</protein>
<gene>
    <name type="primary">sceD1</name>
    <name type="ordered locus">SSP0117</name>
</gene>
<reference key="1">
    <citation type="journal article" date="2005" name="Proc. Natl. Acad. Sci. U.S.A.">
        <title>Whole genome sequence of Staphylococcus saprophyticus reveals the pathogenesis of uncomplicated urinary tract infection.</title>
        <authorList>
            <person name="Kuroda M."/>
            <person name="Yamashita A."/>
            <person name="Hirakawa H."/>
            <person name="Kumano M."/>
            <person name="Morikawa K."/>
            <person name="Higashide M."/>
            <person name="Maruyama A."/>
            <person name="Inose Y."/>
            <person name="Matoba K."/>
            <person name="Toh H."/>
            <person name="Kuhara S."/>
            <person name="Hattori M."/>
            <person name="Ohta T."/>
        </authorList>
    </citation>
    <scope>NUCLEOTIDE SEQUENCE [LARGE SCALE GENOMIC DNA]</scope>
    <source>
        <strain>ATCC 15305 / DSM 20229 / NCIMB 8711 / NCTC 7292 / S-41</strain>
    </source>
</reference>